<evidence type="ECO:0000250" key="1"/>
<evidence type="ECO:0000256" key="2">
    <source>
        <dbReference type="SAM" id="MobiDB-lite"/>
    </source>
</evidence>
<evidence type="ECO:0000305" key="3"/>
<keyword id="KW-1035">Host cytoplasm</keyword>
<keyword id="KW-1048">Host nucleus</keyword>
<keyword id="KW-1185">Reference proteome</keyword>
<keyword id="KW-0946">Virion</keyword>
<keyword id="KW-0920">Virion tegument</keyword>
<name>TEG3_PSHV1</name>
<protein>
    <recommendedName>
        <fullName>Tegument protein UL14</fullName>
    </recommendedName>
</protein>
<gene>
    <name type="primary">UL14</name>
</gene>
<organismHost>
    <name type="scientific">Amazona oratrix</name>
    <name type="common">yellow-headed parrot</name>
    <dbReference type="NCBI Taxonomy" id="152276"/>
</organismHost>
<proteinExistence type="inferred from homology"/>
<sequence length="196" mass="21810">MALYDVDCRDTRRERRIQARTKIMEYIKGSAYKASVLEMTSAGVSPSHPAFRHAFTKATEHEEAAKIAAQVDKRMVSVRRKIARITAVVNGQRELASELKGYRRYLSSGFLDTFAAEADKLYEDEISLECAEAELSQHLPAGEDYDEGENELLVRWQLEGAPVPSRSPITPYRTGESSGVSPKSPQGPSDATCVRQ</sequence>
<dbReference type="EMBL" id="AY372243">
    <property type="protein sequence ID" value="AAQ73732.1"/>
    <property type="molecule type" value="Genomic_DNA"/>
</dbReference>
<dbReference type="RefSeq" id="NP_944426.1">
    <property type="nucleotide sequence ID" value="NC_005264.1"/>
</dbReference>
<dbReference type="SMR" id="Q6UDH8"/>
<dbReference type="GeneID" id="2656988"/>
<dbReference type="KEGG" id="vg:2656988"/>
<dbReference type="Proteomes" id="UP000006840">
    <property type="component" value="Segment"/>
</dbReference>
<dbReference type="GO" id="GO:0030430">
    <property type="term" value="C:host cell cytoplasm"/>
    <property type="evidence" value="ECO:0007669"/>
    <property type="project" value="UniProtKB-SubCell"/>
</dbReference>
<dbReference type="GO" id="GO:0042025">
    <property type="term" value="C:host cell nucleus"/>
    <property type="evidence" value="ECO:0007669"/>
    <property type="project" value="UniProtKB-SubCell"/>
</dbReference>
<dbReference type="GO" id="GO:0019033">
    <property type="term" value="C:viral tegument"/>
    <property type="evidence" value="ECO:0007669"/>
    <property type="project" value="UniProtKB-SubCell"/>
</dbReference>
<dbReference type="InterPro" id="IPR005207">
    <property type="entry name" value="Herpes_UL14"/>
</dbReference>
<dbReference type="Pfam" id="PF03580">
    <property type="entry name" value="Herpes_UL14"/>
    <property type="match status" value="1"/>
</dbReference>
<comment type="subcellular location">
    <subcellularLocation>
        <location evidence="1">Virion tegument</location>
    </subcellularLocation>
    <subcellularLocation>
        <location evidence="1">Host cytoplasm</location>
    </subcellularLocation>
    <subcellularLocation>
        <location evidence="1">Host nucleus</location>
    </subcellularLocation>
</comment>
<comment type="similarity">
    <text evidence="3">Belongs to the alphaherpesvirinae HHV-1 UL14 protein family.</text>
</comment>
<feature type="chain" id="PRO_0000406810" description="Tegument protein UL14">
    <location>
        <begin position="1"/>
        <end position="196"/>
    </location>
</feature>
<feature type="region of interest" description="Disordered" evidence="2">
    <location>
        <begin position="162"/>
        <end position="196"/>
    </location>
</feature>
<feature type="compositionally biased region" description="Polar residues" evidence="2">
    <location>
        <begin position="175"/>
        <end position="196"/>
    </location>
</feature>
<reference key="1">
    <citation type="journal article" date="2006" name="J. Virol.">
        <title>Psittacid herpesvirus 1 and infectious laryngotracheitis virus: Comparative genome sequence analysis of two avian alphaherpesviruses.</title>
        <authorList>
            <person name="Thureen D.R."/>
            <person name="Keeler C.L. Jr."/>
        </authorList>
    </citation>
    <scope>NUCLEOTIDE SEQUENCE [LARGE SCALE GENOMIC DNA]</scope>
</reference>
<organism>
    <name type="scientific">Psittacid herpesvirus 1 (isolate Amazon parrot/-/97-0001/1997)</name>
    <name type="common">PsHV-1</name>
    <name type="synonym">Pacheco's disease virus</name>
    <dbReference type="NCBI Taxonomy" id="670426"/>
    <lineage>
        <taxon>Viruses</taxon>
        <taxon>Duplodnaviria</taxon>
        <taxon>Heunggongvirae</taxon>
        <taxon>Peploviricota</taxon>
        <taxon>Herviviricetes</taxon>
        <taxon>Herpesvirales</taxon>
        <taxon>Orthoherpesviridae</taxon>
        <taxon>Alphaherpesvirinae</taxon>
        <taxon>Iltovirus</taxon>
        <taxon>Iltovirus psittacidalpha1</taxon>
        <taxon>Psittacid alphaherpesvirus 1</taxon>
    </lineage>
</organism>
<accession>Q6UDH8</accession>